<comment type="function">
    <text evidence="1">Part of ribonuclease P, a protein complex that generates mature tRNA molecules by cleaving their 5'-ends.</text>
</comment>
<comment type="catalytic activity">
    <reaction evidence="1">
        <text>Endonucleolytic cleavage of RNA, removing 5'-extranucleotides from tRNA precursor.</text>
        <dbReference type="EC" id="3.1.26.5"/>
    </reaction>
</comment>
<comment type="subunit">
    <text evidence="1">Consists of a catalytic RNA component and at least 4-5 protein subunits.</text>
</comment>
<comment type="subcellular location">
    <subcellularLocation>
        <location evidence="1">Cytoplasm</location>
    </subcellularLocation>
</comment>
<comment type="similarity">
    <text evidence="1">Belongs to the eukaryotic/archaeal RNase P protein component 1 family.</text>
</comment>
<reference key="1">
    <citation type="journal article" date="1990" name="FEBS Lett.">
        <title>Nucleotide sequence of four genes encoding ribosomal proteins from the 'S10 and spectinomycin' operon equivalent region in the archaebacterium Halobacterium marismortui.</title>
        <authorList>
            <person name="Arndt E."/>
        </authorList>
    </citation>
    <scope>NUCLEOTIDE SEQUENCE [GENOMIC DNA]</scope>
</reference>
<reference key="2">
    <citation type="journal article" date="2004" name="Genome Res.">
        <title>Genome sequence of Haloarcula marismortui: a halophilic archaeon from the Dead Sea.</title>
        <authorList>
            <person name="Baliga N.S."/>
            <person name="Bonneau R."/>
            <person name="Facciotti M.T."/>
            <person name="Pan M."/>
            <person name="Glusman G."/>
            <person name="Deutsch E.W."/>
            <person name="Shannon P."/>
            <person name="Chiu Y."/>
            <person name="Weng R.S."/>
            <person name="Gan R.R."/>
            <person name="Hung P."/>
            <person name="Date S.V."/>
            <person name="Marcotte E."/>
            <person name="Hood L."/>
            <person name="Ng W.V."/>
        </authorList>
    </citation>
    <scope>NUCLEOTIDE SEQUENCE [LARGE SCALE GENOMIC DNA]</scope>
    <source>
        <strain>ATCC 43049 / DSM 3752 / JCM 8966 / VKM B-1809</strain>
    </source>
</reference>
<reference key="3">
    <citation type="journal article" date="1990" name="J. Biol. Chem.">
        <title>Organization and nucleotide sequence of a gene cluster coding for eight ribosomal proteins in the archaebacterium Halobacterium marismortui.</title>
        <authorList>
            <person name="Arndt E."/>
            <person name="Kroemer W."/>
            <person name="Hatakeyama T."/>
        </authorList>
    </citation>
    <scope>NUCLEOTIDE SEQUENCE [GENOMIC DNA] OF 1-67</scope>
</reference>
<accession>P22527</accession>
<accession>P20573</accession>
<accession>Q48239</accession>
<name>RNP1_HALMA</name>
<evidence type="ECO:0000255" key="1">
    <source>
        <dbReference type="HAMAP-Rule" id="MF_00754"/>
    </source>
</evidence>
<feature type="chain" id="PRO_0000128426" description="Ribonuclease P protein component 1">
    <location>
        <begin position="1"/>
        <end position="94"/>
    </location>
</feature>
<protein>
    <recommendedName>
        <fullName evidence="1">Ribonuclease P protein component 1</fullName>
        <shortName evidence="1">RNase P component 1</shortName>
        <ecNumber evidence="1">3.1.26.5</ecNumber>
    </recommendedName>
    <alternativeName>
        <fullName evidence="1">Rpp29</fullName>
    </alternativeName>
</protein>
<proteinExistence type="inferred from homology"/>
<keyword id="KW-0963">Cytoplasm</keyword>
<keyword id="KW-0255">Endonuclease</keyword>
<keyword id="KW-0378">Hydrolase</keyword>
<keyword id="KW-0540">Nuclease</keyword>
<keyword id="KW-1185">Reference proteome</keyword>
<keyword id="KW-0819">tRNA processing</keyword>
<dbReference type="EC" id="3.1.26.5" evidence="1"/>
<dbReference type="EMBL" id="X55311">
    <property type="protein sequence ID" value="CAA39016.1"/>
    <property type="molecule type" value="Genomic_DNA"/>
</dbReference>
<dbReference type="EMBL" id="AY596297">
    <property type="status" value="NOT_ANNOTATED_CDS"/>
    <property type="molecule type" value="Genomic_DNA"/>
</dbReference>
<dbReference type="EMBL" id="J05222">
    <property type="protein sequence ID" value="AAA86867.1"/>
    <property type="molecule type" value="Genomic_DNA"/>
</dbReference>
<dbReference type="PIR" id="S10732">
    <property type="entry name" value="S10732"/>
</dbReference>
<dbReference type="RefSeq" id="WP_007187647.1">
    <property type="nucleotide sequence ID" value="NZ_CP039138.1"/>
</dbReference>
<dbReference type="SMR" id="P22527"/>
<dbReference type="Proteomes" id="UP000001169">
    <property type="component" value="Chromosome I"/>
</dbReference>
<dbReference type="GO" id="GO:0005737">
    <property type="term" value="C:cytoplasm"/>
    <property type="evidence" value="ECO:0007669"/>
    <property type="project" value="UniProtKB-SubCell"/>
</dbReference>
<dbReference type="GO" id="GO:0030677">
    <property type="term" value="C:ribonuclease P complex"/>
    <property type="evidence" value="ECO:0007669"/>
    <property type="project" value="UniProtKB-UniRule"/>
</dbReference>
<dbReference type="GO" id="GO:0004526">
    <property type="term" value="F:ribonuclease P activity"/>
    <property type="evidence" value="ECO:0007669"/>
    <property type="project" value="UniProtKB-UniRule"/>
</dbReference>
<dbReference type="GO" id="GO:0003723">
    <property type="term" value="F:RNA binding"/>
    <property type="evidence" value="ECO:0007669"/>
    <property type="project" value="InterPro"/>
</dbReference>
<dbReference type="GO" id="GO:0001682">
    <property type="term" value="P:tRNA 5'-leader removal"/>
    <property type="evidence" value="ECO:0007669"/>
    <property type="project" value="UniProtKB-UniRule"/>
</dbReference>
<dbReference type="Gene3D" id="2.30.30.210">
    <property type="entry name" value="Ribonuclease P/MRP, subunit p29"/>
    <property type="match status" value="1"/>
</dbReference>
<dbReference type="HAMAP" id="MF_00754">
    <property type="entry name" value="RNase_P_1"/>
    <property type="match status" value="1"/>
</dbReference>
<dbReference type="InterPro" id="IPR036980">
    <property type="entry name" value="RNase_P/MRP_Rpp29_sf"/>
</dbReference>
<dbReference type="InterPro" id="IPR023538">
    <property type="entry name" value="RNP1"/>
</dbReference>
<dbReference type="InterPro" id="IPR023534">
    <property type="entry name" value="Rof/RNase_P-like"/>
</dbReference>
<dbReference type="InterPro" id="IPR002730">
    <property type="entry name" value="Rpp29/RNP1"/>
</dbReference>
<dbReference type="Pfam" id="PF01868">
    <property type="entry name" value="RNase_P-MRP_p29"/>
    <property type="match status" value="1"/>
</dbReference>
<dbReference type="SMART" id="SM00538">
    <property type="entry name" value="POP4"/>
    <property type="match status" value="1"/>
</dbReference>
<dbReference type="SUPFAM" id="SSF101744">
    <property type="entry name" value="Rof/RNase P subunit-like"/>
    <property type="match status" value="1"/>
</dbReference>
<organism>
    <name type="scientific">Haloarcula marismortui (strain ATCC 43049 / DSM 3752 / JCM 8966 / VKM B-1809)</name>
    <name type="common">Halobacterium marismortui</name>
    <dbReference type="NCBI Taxonomy" id="272569"/>
    <lineage>
        <taxon>Archaea</taxon>
        <taxon>Methanobacteriati</taxon>
        <taxon>Methanobacteriota</taxon>
        <taxon>Stenosarchaea group</taxon>
        <taxon>Halobacteria</taxon>
        <taxon>Halobacteriales</taxon>
        <taxon>Haloarculaceae</taxon>
        <taxon>Haloarcula</taxon>
    </lineage>
</organism>
<gene>
    <name evidence="1" type="primary">rnp1</name>
    <name type="ordered locus">rrnAC1603.1</name>
</gene>
<sequence length="94" mass="10277">MPLTPETLPRHELVGLDCEVVAASNPDVIGISGTVVMETTQMLTLEGADRVWHVPKDSATFAFDLSTETVLVDGDRLVARPARRTENTGDSLWR</sequence>